<name>PHS_PSYIN</name>
<proteinExistence type="inferred from homology"/>
<reference key="1">
    <citation type="journal article" date="2008" name="BMC Genomics">
        <title>Genomics of an extreme psychrophile, Psychromonas ingrahamii.</title>
        <authorList>
            <person name="Riley M."/>
            <person name="Staley J.T."/>
            <person name="Danchin A."/>
            <person name="Wang T.Z."/>
            <person name="Brettin T.S."/>
            <person name="Hauser L.J."/>
            <person name="Land M.L."/>
            <person name="Thompson L.S."/>
        </authorList>
    </citation>
    <scope>NUCLEOTIDE SEQUENCE [LARGE SCALE GENOMIC DNA]</scope>
    <source>
        <strain>DSM 17664 / CCUG 51855 / 37</strain>
    </source>
</reference>
<sequence length="102" mass="12002">MDLKKLSGSELLIELEKLNCDLAIPWKIEDEKLSKTFKFKNFMQAFAFMTQSALYAEKKNHHPEWFNIYNKVVIQLTTHDVAGISFKDFDLAKKMESFIPHF</sequence>
<keyword id="KW-0456">Lyase</keyword>
<keyword id="KW-1185">Reference proteome</keyword>
<protein>
    <recommendedName>
        <fullName evidence="1">Putative pterin-4-alpha-carbinolamine dehydratase</fullName>
        <shortName evidence="1">PHS</shortName>
        <ecNumber evidence="1">4.2.1.96</ecNumber>
    </recommendedName>
    <alternativeName>
        <fullName evidence="1">4-alpha-hydroxy-tetrahydropterin dehydratase</fullName>
    </alternativeName>
    <alternativeName>
        <fullName evidence="1">Pterin carbinolamine dehydratase</fullName>
        <shortName evidence="1">PCD</shortName>
    </alternativeName>
</protein>
<evidence type="ECO:0000255" key="1">
    <source>
        <dbReference type="HAMAP-Rule" id="MF_00434"/>
    </source>
</evidence>
<organism>
    <name type="scientific">Psychromonas ingrahamii (strain DSM 17664 / CCUG 51855 / 37)</name>
    <dbReference type="NCBI Taxonomy" id="357804"/>
    <lineage>
        <taxon>Bacteria</taxon>
        <taxon>Pseudomonadati</taxon>
        <taxon>Pseudomonadota</taxon>
        <taxon>Gammaproteobacteria</taxon>
        <taxon>Alteromonadales</taxon>
        <taxon>Psychromonadaceae</taxon>
        <taxon>Psychromonas</taxon>
    </lineage>
</organism>
<gene>
    <name type="ordered locus">Ping_0706</name>
</gene>
<feature type="chain" id="PRO_1000050440" description="Putative pterin-4-alpha-carbinolamine dehydratase">
    <location>
        <begin position="1"/>
        <end position="102"/>
    </location>
</feature>
<dbReference type="EC" id="4.2.1.96" evidence="1"/>
<dbReference type="EMBL" id="CP000510">
    <property type="protein sequence ID" value="ABM02558.1"/>
    <property type="molecule type" value="Genomic_DNA"/>
</dbReference>
<dbReference type="RefSeq" id="WP_011769117.1">
    <property type="nucleotide sequence ID" value="NC_008709.1"/>
</dbReference>
<dbReference type="SMR" id="A1SSU3"/>
<dbReference type="STRING" id="357804.Ping_0706"/>
<dbReference type="KEGG" id="pin:Ping_0706"/>
<dbReference type="eggNOG" id="COG2154">
    <property type="taxonomic scope" value="Bacteria"/>
</dbReference>
<dbReference type="HOGENOM" id="CLU_081974_3_2_6"/>
<dbReference type="OrthoDB" id="5294615at2"/>
<dbReference type="Proteomes" id="UP000000639">
    <property type="component" value="Chromosome"/>
</dbReference>
<dbReference type="GO" id="GO:0008124">
    <property type="term" value="F:4-alpha-hydroxytetrahydrobiopterin dehydratase activity"/>
    <property type="evidence" value="ECO:0007669"/>
    <property type="project" value="UniProtKB-UniRule"/>
</dbReference>
<dbReference type="GO" id="GO:0006729">
    <property type="term" value="P:tetrahydrobiopterin biosynthetic process"/>
    <property type="evidence" value="ECO:0007669"/>
    <property type="project" value="InterPro"/>
</dbReference>
<dbReference type="CDD" id="cd00914">
    <property type="entry name" value="PCD_DCoH_subfamily_b"/>
    <property type="match status" value="1"/>
</dbReference>
<dbReference type="Gene3D" id="3.30.1360.20">
    <property type="entry name" value="Transcriptional coactivator/pterin dehydratase"/>
    <property type="match status" value="1"/>
</dbReference>
<dbReference type="HAMAP" id="MF_00434">
    <property type="entry name" value="Pterin_4_alpha"/>
    <property type="match status" value="1"/>
</dbReference>
<dbReference type="InterPro" id="IPR036428">
    <property type="entry name" value="PCD_sf"/>
</dbReference>
<dbReference type="InterPro" id="IPR001533">
    <property type="entry name" value="Pterin_deHydtase"/>
</dbReference>
<dbReference type="NCBIfam" id="NF002018">
    <property type="entry name" value="PRK00823.1-3"/>
    <property type="match status" value="1"/>
</dbReference>
<dbReference type="PANTHER" id="PTHR12599">
    <property type="entry name" value="PTERIN-4-ALPHA-CARBINOLAMINE DEHYDRATASE"/>
    <property type="match status" value="1"/>
</dbReference>
<dbReference type="PANTHER" id="PTHR12599:SF0">
    <property type="entry name" value="PTERIN-4-ALPHA-CARBINOLAMINE DEHYDRATASE"/>
    <property type="match status" value="1"/>
</dbReference>
<dbReference type="Pfam" id="PF01329">
    <property type="entry name" value="Pterin_4a"/>
    <property type="match status" value="1"/>
</dbReference>
<dbReference type="SUPFAM" id="SSF55248">
    <property type="entry name" value="PCD-like"/>
    <property type="match status" value="1"/>
</dbReference>
<comment type="catalytic activity">
    <reaction evidence="1">
        <text>(4aS,6R)-4a-hydroxy-L-erythro-5,6,7,8-tetrahydrobiopterin = (6R)-L-erythro-6,7-dihydrobiopterin + H2O</text>
        <dbReference type="Rhea" id="RHEA:11920"/>
        <dbReference type="ChEBI" id="CHEBI:15377"/>
        <dbReference type="ChEBI" id="CHEBI:15642"/>
        <dbReference type="ChEBI" id="CHEBI:43120"/>
        <dbReference type="EC" id="4.2.1.96"/>
    </reaction>
</comment>
<comment type="similarity">
    <text evidence="1">Belongs to the pterin-4-alpha-carbinolamine dehydratase family.</text>
</comment>
<accession>A1SSU3</accession>